<evidence type="ECO:0000250" key="1">
    <source>
        <dbReference type="UniProtKB" id="P06733"/>
    </source>
</evidence>
<evidence type="ECO:0000250" key="2">
    <source>
        <dbReference type="UniProtKB" id="Q7RA60"/>
    </source>
</evidence>
<evidence type="ECO:0000250" key="3">
    <source>
        <dbReference type="UniProtKB" id="Q8IJN7"/>
    </source>
</evidence>
<evidence type="ECO:0000250" key="4">
    <source>
        <dbReference type="UniProtKB" id="W7JLR6"/>
    </source>
</evidence>
<evidence type="ECO:0000255" key="5">
    <source>
        <dbReference type="PIRSR" id="PIRSR001400-1"/>
    </source>
</evidence>
<evidence type="ECO:0000255" key="6">
    <source>
        <dbReference type="PIRSR" id="PIRSR001400-2"/>
    </source>
</evidence>
<evidence type="ECO:0000269" key="7">
    <source>
    </source>
</evidence>
<evidence type="ECO:0000269" key="8">
    <source>
    </source>
</evidence>
<evidence type="ECO:0000303" key="9">
    <source>
    </source>
</evidence>
<evidence type="ECO:0000305" key="10"/>
<evidence type="ECO:0000312" key="11">
    <source>
        <dbReference type="EMBL" id="VUC57042.1"/>
    </source>
</evidence>
<evidence type="ECO:0000312" key="12">
    <source>
        <dbReference type="Proteomes" id="UP000074855"/>
    </source>
</evidence>
<proteinExistence type="evidence at protein level"/>
<comment type="function">
    <text evidence="4 7 8">Glycolytic enzyme that catalyzes the conversion of 2-phosphoglycerate to phosphoenolpyruvate (By similarity). In addition to glycolysis, involved in various processes such as parasite development and invasion (PubMed:21949403, PubMed:24474798). Plays an essential role during ookinete invasion of the mosquito vector midgut by mediating the interaction of the ookinete with the midgut epithelium and, further, by binding to mammalian host plasminogen in the blood meal, whose conversion to active plasmin promotes the invasion process (PubMed:21949403, PubMed:24474798).</text>
</comment>
<comment type="catalytic activity">
    <reaction evidence="4">
        <text>(2R)-2-phosphoglycerate = phosphoenolpyruvate + H2O</text>
        <dbReference type="Rhea" id="RHEA:10164"/>
        <dbReference type="ChEBI" id="CHEBI:15377"/>
        <dbReference type="ChEBI" id="CHEBI:58289"/>
        <dbReference type="ChEBI" id="CHEBI:58702"/>
        <dbReference type="EC" id="4.2.1.11"/>
    </reaction>
    <physiologicalReaction direction="left-to-right" evidence="4">
        <dbReference type="Rhea" id="RHEA:10165"/>
    </physiologicalReaction>
    <physiologicalReaction direction="right-to-left" evidence="4">
        <dbReference type="Rhea" id="RHEA:10166"/>
    </physiologicalReaction>
</comment>
<comment type="cofactor">
    <cofactor evidence="3">
        <name>Mg(2+)</name>
        <dbReference type="ChEBI" id="CHEBI:18420"/>
    </cofactor>
    <text evidence="3 4">Binds 2 Mg(2+) ions per subunit (By similarity). Mg(2+) is required for catalysis and for stabilizing the dimer (By similarity). Unlike for mammalian and yeast enolases, Mg(2+) is dispensable to form an active closed conformation (By similarity). Inhibited by high levels of Mg(2+) (By similarity).</text>
</comment>
<comment type="pathway">
    <text evidence="3">Carbohydrate degradation; glycolysis; pyruvate from D-glyceraldehyde 3-phosphate: step 4/5.</text>
</comment>
<comment type="subunit">
    <text evidence="3 4 7 8">Homodimer (By similarity). Forms a complex at least composed of DegP, ENO and HSP70 (By similarity). Interacts with G-actin (By similarity). Interacts (via the DKSLVK motif) with mammalian host PLG/plasminogen (present in the mosquito blood meal); the interaction occurs at the ookinete cell surface and is required for ookinete invasion of the mosquito midgut (PubMed:21949403). Interacts with A.gambiae EBP; depending on the Plasmodium species, the interaction is either involved in ookinete invasion of the mosquito midgut (P.berghei) or is dispensable (P.falciparum) (PubMed:24474798).</text>
</comment>
<comment type="subcellular location">
    <subcellularLocation>
        <location evidence="7">Cytoplasm</location>
    </subcellularLocation>
    <subcellularLocation>
        <location evidence="7">Nucleus</location>
    </subcellularLocation>
    <subcellularLocation>
        <location evidence="4">Cytoplasm</location>
        <location evidence="4">Cytoskeleton</location>
    </subcellularLocation>
    <subcellularLocation>
        <location evidence="7 8">Cell surface</location>
    </subcellularLocation>
    <subcellularLocation>
        <location evidence="2">Cell membrane</location>
        <topology evidence="10">Peripheral membrane protein</topology>
        <orientation evidence="2">Cytoplasmic side</orientation>
    </subcellularLocation>
    <subcellularLocation>
        <location evidence="3">Vacuole</location>
    </subcellularLocation>
    <text evidence="2 3 4 7 8">Partially localizes to the nucleus in rings and trophozoites. Localization to the nucleus and food vacuole is higher in early and mid-stage trophozoites compared to the late-stage trophozoites and schizonts (By similarity). In the nucleus, localizes to heterochromatin region (By similarity). In rings, nuclear localization is dependent on the actin cytoskeleton (By similarity). Localizes to the cell surface of merozoites (By similarity). In gametocytes, predominantly localizes to the actin cytoskeleton (By similarity). In the trophozoite food vacuole, colocalizes with hemozoin, a product of heme detoxification (By similarity). In sporozoites, localizes to punctate structures beneath the cell membrane (By similarity). Localizes to the cell surface of ookinetes, especially on the apical pellicle complex that is involved in invasion (PubMed:21949403, PubMed:24474798). When phosphorylated at Thr-339, localizes to the cytoskeleton (By similarity). When phosphorylated at Ser-42, localizes to the cytoplasm (By similarity). When ubiquitinated at Lys-138, acetylated at Lys-133 and Lys-375 and phosphorylated at Tyr-139, localizes to the food vacuole (By similarity). When triubiquitinated at Lys-138, appears to colocalize with hemozoin in the food vacuole (By similarity).</text>
</comment>
<comment type="developmental stage">
    <text evidence="7 8">Expressed in ookinetes (at protein level).</text>
</comment>
<comment type="domain">
    <text evidence="3">The pentapeptide insert motif is required for the stabilization of the apo-enzyme in an active closed conformation, independently of Mg(2+) binding. The motif is also required for homodimerization. This motif is only present in Apicomplexa and plant enolases.</text>
</comment>
<comment type="domain">
    <text evidence="4">The DKSLVK motif binds to the lysine-binding Kringle domains of plasminogen from various mammalian species. This motif is present only in enolases of plant and several microbial pathogens including Plasmodium species.</text>
</comment>
<comment type="biotechnology">
    <text evidence="7 8">The salivary gland and midgut peptide SM1 (PCQRAIFQSICK) is a dodecapeptide that mimics enolase DKSLVK motif. By binding the EBP receptor on the luminal surface of the female mosquito midgut epithelium, SM1 inhibits ookinete invasion of P.berghei and thus, could potentially be used to prevent parasite transmission by the mosquito vector (PubMed:21949403, PubMed:24474798). Similarly, another peptide, MP2 (ACYIKTLHPPCS), also inhibits ookinete invasion of P.berghei and P.falciparum and could potentially be used to prevent parasite transmission by the mosquito vector (PubMed:24474798).</text>
</comment>
<comment type="similarity">
    <text evidence="10">Belongs to the enolase family.</text>
</comment>
<feature type="chain" id="PRO_0000456087" description="Enolase">
    <location>
        <begin position="1"/>
        <end position="446"/>
    </location>
</feature>
<feature type="short sequence motif" description="Pentapeptide insert" evidence="3">
    <location>
        <begin position="104"/>
        <end position="108"/>
    </location>
</feature>
<feature type="short sequence motif" description="DKSLVK motif" evidence="4">
    <location>
        <begin position="277"/>
        <end position="282"/>
    </location>
</feature>
<feature type="active site" description="Proton donor" evidence="5">
    <location>
        <position position="218"/>
    </location>
</feature>
<feature type="active site" description="Proton acceptor" evidence="5">
    <location>
        <position position="356"/>
    </location>
</feature>
<feature type="binding site" evidence="1">
    <location>
        <position position="42"/>
    </location>
    <ligand>
        <name>Mg(2+)</name>
        <dbReference type="ChEBI" id="CHEBI:18420"/>
        <label>1</label>
    </ligand>
</feature>
<feature type="binding site" evidence="6">
    <location>
        <position position="166"/>
    </location>
    <ligand>
        <name>substrate</name>
    </ligand>
</feature>
<feature type="binding site" evidence="6">
    <location>
        <position position="175"/>
    </location>
    <ligand>
        <name>substrate</name>
    </ligand>
</feature>
<feature type="binding site" evidence="1">
    <location>
        <position position="253"/>
    </location>
    <ligand>
        <name>Mg(2+)</name>
        <dbReference type="ChEBI" id="CHEBI:18420"/>
        <label>2</label>
    </ligand>
</feature>
<feature type="binding site" evidence="1">
    <location>
        <position position="304"/>
    </location>
    <ligand>
        <name>Mg(2+)</name>
        <dbReference type="ChEBI" id="CHEBI:18420"/>
        <label>2</label>
    </ligand>
</feature>
<feature type="binding site" evidence="6">
    <location>
        <position position="304"/>
    </location>
    <ligand>
        <name>substrate</name>
    </ligand>
</feature>
<feature type="binding site" evidence="1">
    <location>
        <position position="331"/>
    </location>
    <ligand>
        <name>Mg(2+)</name>
        <dbReference type="ChEBI" id="CHEBI:18420"/>
        <label>2</label>
    </ligand>
</feature>
<feature type="binding site" evidence="6">
    <location>
        <position position="331"/>
    </location>
    <ligand>
        <name>substrate</name>
    </ligand>
</feature>
<feature type="binding site" evidence="1">
    <location>
        <begin position="383"/>
        <end position="386"/>
    </location>
    <ligand>
        <name>substrate</name>
    </ligand>
</feature>
<feature type="binding site" evidence="6">
    <location>
        <position position="407"/>
    </location>
    <ligand>
        <name>substrate</name>
    </ligand>
</feature>
<feature type="modified residue" description="Phosphoserine" evidence="3">
    <location>
        <position position="42"/>
    </location>
</feature>
<feature type="modified residue" description="N6-acetyllysine" evidence="2">
    <location>
        <position position="133"/>
    </location>
</feature>
<feature type="modified residue" description="Phosphotyrosine" evidence="2">
    <location>
        <position position="139"/>
    </location>
</feature>
<feature type="modified residue" description="Phosphothreonine" evidence="2">
    <location>
        <position position="339"/>
    </location>
</feature>
<feature type="modified residue" description="N6-acetyllysine" evidence="2">
    <location>
        <position position="375"/>
    </location>
</feature>
<feature type="cross-link" description="Glycyl lysine isopeptide (Lys-Gly) (interchain with G-Cter in ubiquitin)" evidence="2">
    <location>
        <position position="138"/>
    </location>
</feature>
<protein>
    <recommendedName>
        <fullName evidence="9">Enolase</fullName>
        <ecNumber evidence="3">4.2.1.11</ecNumber>
    </recommendedName>
</protein>
<organism evidence="12">
    <name type="scientific">Plasmodium berghei (strain Anka)</name>
    <dbReference type="NCBI Taxonomy" id="5823"/>
    <lineage>
        <taxon>Eukaryota</taxon>
        <taxon>Sar</taxon>
        <taxon>Alveolata</taxon>
        <taxon>Apicomplexa</taxon>
        <taxon>Aconoidasida</taxon>
        <taxon>Haemosporida</taxon>
        <taxon>Plasmodiidae</taxon>
        <taxon>Plasmodium</taxon>
        <taxon>Plasmodium (Vinckeia)</taxon>
    </lineage>
</organism>
<gene>
    <name evidence="3" type="primary">ENO</name>
    <name evidence="11" type="ORF">PBANKA_1214300</name>
</gene>
<reference evidence="12" key="1">
    <citation type="journal article" date="2014" name="BMC Biol.">
        <title>A comprehensive evaluation of rodent malaria parasite genomes and gene expression.</title>
        <authorList>
            <person name="Otto T.D."/>
            <person name="Bohme U."/>
            <person name="Jackson A.P."/>
            <person name="Hunt M."/>
            <person name="Franke-Fayard B."/>
            <person name="Hoeijmakers W.A."/>
            <person name="Religa A.A."/>
            <person name="Robertson L."/>
            <person name="Sanders M."/>
            <person name="Ogun S.A."/>
            <person name="Cunningham D."/>
            <person name="Erhart A."/>
            <person name="Billker O."/>
            <person name="Khan S.M."/>
            <person name="Stunnenberg H.G."/>
            <person name="Langhorne J."/>
            <person name="Holder A.A."/>
            <person name="Waters A.P."/>
            <person name="Newbold C.I."/>
            <person name="Pain A."/>
            <person name="Berriman M."/>
            <person name="Janse C.J."/>
        </authorList>
    </citation>
    <scope>NUCLEOTIDE SEQUENCE [LARGE SCALE GENOMIC DNA]</scope>
    <source>
        <strain evidence="12">ANKA</strain>
    </source>
</reference>
<reference evidence="10" key="2">
    <citation type="journal article" date="2011" name="Proc. Natl. Acad. Sci. U.S.A.">
        <title>Plasmodium ookinetes coopt mammalian plasminogen to invade the mosquito midgut.</title>
        <authorList>
            <person name="Ghosh A.K."/>
            <person name="Coppens I."/>
            <person name="Gaardsvoll H."/>
            <person name="Ploug M."/>
            <person name="Jacobs-Lorena M."/>
        </authorList>
    </citation>
    <scope>FUNCTION</scope>
    <scope>SUBCELLULAR LOCATION</scope>
    <scope>INTERACTION WITH HOST PLG</scope>
    <scope>IDENTIFICATION BY MASS SPECTROMETRY</scope>
    <scope>DEVELOPMENTAL STAGE</scope>
    <scope>BIOTECHNOLOGY</scope>
</reference>
<reference evidence="10" key="3">
    <citation type="journal article" date="2014" name="Proc. Natl. Acad. Sci. U.S.A.">
        <title>Multiple pathways for Plasmodium ookinete invasion of the mosquito midgut.</title>
        <authorList>
            <person name="Vega-Rodriguez J."/>
            <person name="Ghosh A.K."/>
            <person name="Kanzok S.M."/>
            <person name="Dinglasan R.R."/>
            <person name="Wang S."/>
            <person name="Bongio N.J."/>
            <person name="Kalume D.E."/>
            <person name="Miura K."/>
            <person name="Long C.A."/>
            <person name="Pandey A."/>
            <person name="Jacobs-Lorena M."/>
        </authorList>
    </citation>
    <scope>FUNCTION</scope>
    <scope>INTERACTION WITH A.GAMBIAE EBP</scope>
    <scope>SUBCELLULAR LOCATION</scope>
    <scope>DEVELOPMENTAL STAGE</scope>
    <scope>BIOTECHNOLOGY</scope>
</reference>
<dbReference type="EC" id="4.2.1.11" evidence="3"/>
<dbReference type="EMBL" id="LK023127">
    <property type="protein sequence ID" value="VUC57042.1"/>
    <property type="molecule type" value="Genomic_DNA"/>
</dbReference>
<dbReference type="RefSeq" id="XP_676944.1">
    <property type="nucleotide sequence ID" value="XM_671852.1"/>
</dbReference>
<dbReference type="SMR" id="A0A509AQ68"/>
<dbReference type="STRING" id="5823.A0A509AQ68"/>
<dbReference type="VEuPathDB" id="PlasmoDB:PBANKA_1214300"/>
<dbReference type="InParanoid" id="A0A509AQ68"/>
<dbReference type="OMA" id="RCMMSHR"/>
<dbReference type="UniPathway" id="UPA00109">
    <property type="reaction ID" value="UER00187"/>
</dbReference>
<dbReference type="Proteomes" id="UP000074855">
    <property type="component" value="Chromosome 12"/>
</dbReference>
<dbReference type="GO" id="GO:0009986">
    <property type="term" value="C:cell surface"/>
    <property type="evidence" value="ECO:0007669"/>
    <property type="project" value="UniProtKB-SubCell"/>
</dbReference>
<dbReference type="GO" id="GO:0005856">
    <property type="term" value="C:cytoskeleton"/>
    <property type="evidence" value="ECO:0007669"/>
    <property type="project" value="UniProtKB-SubCell"/>
</dbReference>
<dbReference type="GO" id="GO:0005634">
    <property type="term" value="C:nucleus"/>
    <property type="evidence" value="ECO:0007669"/>
    <property type="project" value="UniProtKB-SubCell"/>
</dbReference>
<dbReference type="GO" id="GO:0000015">
    <property type="term" value="C:phosphopyruvate hydratase complex"/>
    <property type="evidence" value="ECO:0007669"/>
    <property type="project" value="InterPro"/>
</dbReference>
<dbReference type="GO" id="GO:0005886">
    <property type="term" value="C:plasma membrane"/>
    <property type="evidence" value="ECO:0007669"/>
    <property type="project" value="UniProtKB-SubCell"/>
</dbReference>
<dbReference type="GO" id="GO:0005773">
    <property type="term" value="C:vacuole"/>
    <property type="evidence" value="ECO:0007669"/>
    <property type="project" value="UniProtKB-SubCell"/>
</dbReference>
<dbReference type="GO" id="GO:0000287">
    <property type="term" value="F:magnesium ion binding"/>
    <property type="evidence" value="ECO:0007669"/>
    <property type="project" value="InterPro"/>
</dbReference>
<dbReference type="GO" id="GO:0004634">
    <property type="term" value="F:phosphopyruvate hydratase activity"/>
    <property type="evidence" value="ECO:0007669"/>
    <property type="project" value="UniProtKB-EC"/>
</dbReference>
<dbReference type="GO" id="GO:0006096">
    <property type="term" value="P:glycolytic process"/>
    <property type="evidence" value="ECO:0007669"/>
    <property type="project" value="UniProtKB-UniPathway"/>
</dbReference>
<dbReference type="CDD" id="cd03313">
    <property type="entry name" value="enolase"/>
    <property type="match status" value="1"/>
</dbReference>
<dbReference type="FunFam" id="3.30.390.10:FF:000001">
    <property type="entry name" value="Enolase"/>
    <property type="match status" value="1"/>
</dbReference>
<dbReference type="FunFam" id="3.20.20.120:FF:000002">
    <property type="entry name" value="Enolase 1"/>
    <property type="match status" value="1"/>
</dbReference>
<dbReference type="Gene3D" id="3.20.20.120">
    <property type="entry name" value="Enolase-like C-terminal domain"/>
    <property type="match status" value="1"/>
</dbReference>
<dbReference type="Gene3D" id="3.30.390.10">
    <property type="entry name" value="Enolase-like, N-terminal domain"/>
    <property type="match status" value="1"/>
</dbReference>
<dbReference type="HAMAP" id="MF_00318">
    <property type="entry name" value="Enolase"/>
    <property type="match status" value="1"/>
</dbReference>
<dbReference type="InterPro" id="IPR000941">
    <property type="entry name" value="Enolase"/>
</dbReference>
<dbReference type="InterPro" id="IPR036849">
    <property type="entry name" value="Enolase-like_C_sf"/>
</dbReference>
<dbReference type="InterPro" id="IPR029017">
    <property type="entry name" value="Enolase-like_N"/>
</dbReference>
<dbReference type="InterPro" id="IPR020810">
    <property type="entry name" value="Enolase_C"/>
</dbReference>
<dbReference type="InterPro" id="IPR020809">
    <property type="entry name" value="Enolase_CS"/>
</dbReference>
<dbReference type="InterPro" id="IPR020811">
    <property type="entry name" value="Enolase_N"/>
</dbReference>
<dbReference type="NCBIfam" id="TIGR01060">
    <property type="entry name" value="eno"/>
    <property type="match status" value="1"/>
</dbReference>
<dbReference type="PANTHER" id="PTHR11902">
    <property type="entry name" value="ENOLASE"/>
    <property type="match status" value="1"/>
</dbReference>
<dbReference type="PANTHER" id="PTHR11902:SF1">
    <property type="entry name" value="ENOLASE"/>
    <property type="match status" value="1"/>
</dbReference>
<dbReference type="Pfam" id="PF00113">
    <property type="entry name" value="Enolase_C"/>
    <property type="match status" value="1"/>
</dbReference>
<dbReference type="Pfam" id="PF03952">
    <property type="entry name" value="Enolase_N"/>
    <property type="match status" value="1"/>
</dbReference>
<dbReference type="PIRSF" id="PIRSF001400">
    <property type="entry name" value="Enolase"/>
    <property type="match status" value="1"/>
</dbReference>
<dbReference type="PRINTS" id="PR00148">
    <property type="entry name" value="ENOLASE"/>
</dbReference>
<dbReference type="SFLD" id="SFLDF00002">
    <property type="entry name" value="enolase"/>
    <property type="match status" value="1"/>
</dbReference>
<dbReference type="SFLD" id="SFLDG00178">
    <property type="entry name" value="enolase"/>
    <property type="match status" value="1"/>
</dbReference>
<dbReference type="SMART" id="SM01192">
    <property type="entry name" value="Enolase_C"/>
    <property type="match status" value="1"/>
</dbReference>
<dbReference type="SMART" id="SM01193">
    <property type="entry name" value="Enolase_N"/>
    <property type="match status" value="1"/>
</dbReference>
<dbReference type="SUPFAM" id="SSF51604">
    <property type="entry name" value="Enolase C-terminal domain-like"/>
    <property type="match status" value="1"/>
</dbReference>
<dbReference type="SUPFAM" id="SSF54826">
    <property type="entry name" value="Enolase N-terminal domain-like"/>
    <property type="match status" value="1"/>
</dbReference>
<dbReference type="PROSITE" id="PS00164">
    <property type="entry name" value="ENOLASE"/>
    <property type="match status" value="1"/>
</dbReference>
<accession>A0A509AQ68</accession>
<sequence>MAHVITRINAREILDSRGNPTVEVDLETTLGIFRAAVPSGASTGIYEALELRDNDKSRYLGKGVQQAIKNINEIIAPKLIGLDCREQKKIDNMMVQELDGSKTEWGWSKSKLGANAILAISMAICRAGAAANKTSLYKYLAQLAGKNTEKMILPVPCLNVINGGSHAGNKLSFQEFMIVPVGAPSFKEAMRYGAEVYHTLKSEIKKKYGIDATNVGDEGGFAPNILNAHEALDLLVASIKKAGYENKVKIAMDVAASEFYNIETKTYDLDFKTPNNDKSLVKTGQELVDLYIELVKKYPIISIEDPFDQDDWENYAKLTEAIGKDVQIVGDDLLVTNPTRIEKALEKKACNALLLKVNQIGSITEAIEACLLSQKNNWGVMVSHRSGETEDVFIADLVVALRTGQIKTGAPCRSERNAKYNQLFRIEESLGANGSFAGDKFRLQLN</sequence>
<name>ENO_PLABA</name>
<keyword id="KW-0007">Acetylation</keyword>
<keyword id="KW-1003">Cell membrane</keyword>
<keyword id="KW-0963">Cytoplasm</keyword>
<keyword id="KW-0206">Cytoskeleton</keyword>
<keyword id="KW-0324">Glycolysis</keyword>
<keyword id="KW-1017">Isopeptide bond</keyword>
<keyword id="KW-0456">Lyase</keyword>
<keyword id="KW-0460">Magnesium</keyword>
<keyword id="KW-0472">Membrane</keyword>
<keyword id="KW-0479">Metal-binding</keyword>
<keyword id="KW-0539">Nucleus</keyword>
<keyword id="KW-0597">Phosphoprotein</keyword>
<keyword id="KW-1185">Reference proteome</keyword>
<keyword id="KW-0832">Ubl conjugation</keyword>
<keyword id="KW-0926">Vacuole</keyword>